<comment type="function">
    <text evidence="1">Catalyzes the conversion of 1-hydroxy-2-methyl-2-(E)-butenyl 4-diphosphate (HMBPP) into a mixture of isopentenyl diphosphate (IPP) and dimethylallyl diphosphate (DMAPP). Acts in the terminal step of the DOXP/MEP pathway for isoprenoid precursor biosynthesis.</text>
</comment>
<comment type="catalytic activity">
    <reaction evidence="1">
        <text>isopentenyl diphosphate + 2 oxidized [2Fe-2S]-[ferredoxin] + H2O = (2E)-4-hydroxy-3-methylbut-2-enyl diphosphate + 2 reduced [2Fe-2S]-[ferredoxin] + 2 H(+)</text>
        <dbReference type="Rhea" id="RHEA:24488"/>
        <dbReference type="Rhea" id="RHEA-COMP:10000"/>
        <dbReference type="Rhea" id="RHEA-COMP:10001"/>
        <dbReference type="ChEBI" id="CHEBI:15377"/>
        <dbReference type="ChEBI" id="CHEBI:15378"/>
        <dbReference type="ChEBI" id="CHEBI:33737"/>
        <dbReference type="ChEBI" id="CHEBI:33738"/>
        <dbReference type="ChEBI" id="CHEBI:128753"/>
        <dbReference type="ChEBI" id="CHEBI:128769"/>
        <dbReference type="EC" id="1.17.7.4"/>
    </reaction>
</comment>
<comment type="catalytic activity">
    <reaction evidence="1">
        <text>dimethylallyl diphosphate + 2 oxidized [2Fe-2S]-[ferredoxin] + H2O = (2E)-4-hydroxy-3-methylbut-2-enyl diphosphate + 2 reduced [2Fe-2S]-[ferredoxin] + 2 H(+)</text>
        <dbReference type="Rhea" id="RHEA:24825"/>
        <dbReference type="Rhea" id="RHEA-COMP:10000"/>
        <dbReference type="Rhea" id="RHEA-COMP:10001"/>
        <dbReference type="ChEBI" id="CHEBI:15377"/>
        <dbReference type="ChEBI" id="CHEBI:15378"/>
        <dbReference type="ChEBI" id="CHEBI:33737"/>
        <dbReference type="ChEBI" id="CHEBI:33738"/>
        <dbReference type="ChEBI" id="CHEBI:57623"/>
        <dbReference type="ChEBI" id="CHEBI:128753"/>
        <dbReference type="EC" id="1.17.7.4"/>
    </reaction>
</comment>
<comment type="cofactor">
    <cofactor evidence="1">
        <name>[4Fe-4S] cluster</name>
        <dbReference type="ChEBI" id="CHEBI:49883"/>
    </cofactor>
    <text evidence="1">Binds 1 [4Fe-4S] cluster per subunit.</text>
</comment>
<comment type="pathway">
    <text evidence="1">Isoprenoid biosynthesis; dimethylallyl diphosphate biosynthesis; dimethylallyl diphosphate from (2E)-4-hydroxy-3-methylbutenyl diphosphate: step 1/1.</text>
</comment>
<comment type="pathway">
    <text evidence="1">Isoprenoid biosynthesis; isopentenyl diphosphate biosynthesis via DXP pathway; isopentenyl diphosphate from 1-deoxy-D-xylulose 5-phosphate: step 6/6.</text>
</comment>
<comment type="similarity">
    <text evidence="1">Belongs to the IspH family.</text>
</comment>
<feature type="chain" id="PRO_0000128881" description="4-hydroxy-3-methylbut-2-enyl diphosphate reductase">
    <location>
        <begin position="1"/>
        <end position="275"/>
    </location>
</feature>
<feature type="active site" description="Proton donor" evidence="1">
    <location>
        <position position="121"/>
    </location>
</feature>
<feature type="binding site" evidence="1">
    <location>
        <position position="12"/>
    </location>
    <ligand>
        <name>[4Fe-4S] cluster</name>
        <dbReference type="ChEBI" id="CHEBI:49883"/>
    </ligand>
</feature>
<feature type="binding site" evidence="1">
    <location>
        <position position="40"/>
    </location>
    <ligand>
        <name>(2E)-4-hydroxy-3-methylbut-2-enyl diphosphate</name>
        <dbReference type="ChEBI" id="CHEBI:128753"/>
    </ligand>
</feature>
<feature type="binding site" evidence="1">
    <location>
        <position position="40"/>
    </location>
    <ligand>
        <name>dimethylallyl diphosphate</name>
        <dbReference type="ChEBI" id="CHEBI:57623"/>
    </ligand>
</feature>
<feature type="binding site" evidence="1">
    <location>
        <position position="40"/>
    </location>
    <ligand>
        <name>isopentenyl diphosphate</name>
        <dbReference type="ChEBI" id="CHEBI:128769"/>
    </ligand>
</feature>
<feature type="binding site" evidence="1">
    <location>
        <position position="70"/>
    </location>
    <ligand>
        <name>(2E)-4-hydroxy-3-methylbut-2-enyl diphosphate</name>
        <dbReference type="ChEBI" id="CHEBI:128753"/>
    </ligand>
</feature>
<feature type="binding site" evidence="1">
    <location>
        <position position="70"/>
    </location>
    <ligand>
        <name>dimethylallyl diphosphate</name>
        <dbReference type="ChEBI" id="CHEBI:57623"/>
    </ligand>
</feature>
<feature type="binding site" evidence="1">
    <location>
        <position position="70"/>
    </location>
    <ligand>
        <name>isopentenyl diphosphate</name>
        <dbReference type="ChEBI" id="CHEBI:128769"/>
    </ligand>
</feature>
<feature type="binding site" evidence="1">
    <location>
        <position position="92"/>
    </location>
    <ligand>
        <name>[4Fe-4S] cluster</name>
        <dbReference type="ChEBI" id="CHEBI:49883"/>
    </ligand>
</feature>
<feature type="binding site" evidence="1">
    <location>
        <position position="119"/>
    </location>
    <ligand>
        <name>(2E)-4-hydroxy-3-methylbut-2-enyl diphosphate</name>
        <dbReference type="ChEBI" id="CHEBI:128753"/>
    </ligand>
</feature>
<feature type="binding site" evidence="1">
    <location>
        <position position="119"/>
    </location>
    <ligand>
        <name>dimethylallyl diphosphate</name>
        <dbReference type="ChEBI" id="CHEBI:57623"/>
    </ligand>
</feature>
<feature type="binding site" evidence="1">
    <location>
        <position position="119"/>
    </location>
    <ligand>
        <name>isopentenyl diphosphate</name>
        <dbReference type="ChEBI" id="CHEBI:128769"/>
    </ligand>
</feature>
<feature type="binding site" evidence="1">
    <location>
        <position position="151"/>
    </location>
    <ligand>
        <name>(2E)-4-hydroxy-3-methylbut-2-enyl diphosphate</name>
        <dbReference type="ChEBI" id="CHEBI:128753"/>
    </ligand>
</feature>
<feature type="binding site" evidence="1">
    <location>
        <position position="181"/>
    </location>
    <ligand>
        <name>[4Fe-4S] cluster</name>
        <dbReference type="ChEBI" id="CHEBI:49883"/>
    </ligand>
</feature>
<feature type="binding site" evidence="1">
    <location>
        <position position="209"/>
    </location>
    <ligand>
        <name>(2E)-4-hydroxy-3-methylbut-2-enyl diphosphate</name>
        <dbReference type="ChEBI" id="CHEBI:128753"/>
    </ligand>
</feature>
<feature type="binding site" evidence="1">
    <location>
        <position position="209"/>
    </location>
    <ligand>
        <name>dimethylallyl diphosphate</name>
        <dbReference type="ChEBI" id="CHEBI:57623"/>
    </ligand>
</feature>
<feature type="binding site" evidence="1">
    <location>
        <position position="209"/>
    </location>
    <ligand>
        <name>isopentenyl diphosphate</name>
        <dbReference type="ChEBI" id="CHEBI:128769"/>
    </ligand>
</feature>
<feature type="binding site" evidence="1">
    <location>
        <position position="210"/>
    </location>
    <ligand>
        <name>(2E)-4-hydroxy-3-methylbut-2-enyl diphosphate</name>
        <dbReference type="ChEBI" id="CHEBI:128753"/>
    </ligand>
</feature>
<feature type="binding site" evidence="1">
    <location>
        <position position="210"/>
    </location>
    <ligand>
        <name>dimethylallyl diphosphate</name>
        <dbReference type="ChEBI" id="CHEBI:57623"/>
    </ligand>
</feature>
<feature type="binding site" evidence="1">
    <location>
        <position position="210"/>
    </location>
    <ligand>
        <name>isopentenyl diphosphate</name>
        <dbReference type="ChEBI" id="CHEBI:128769"/>
    </ligand>
</feature>
<feature type="binding site" evidence="1">
    <location>
        <position position="211"/>
    </location>
    <ligand>
        <name>(2E)-4-hydroxy-3-methylbut-2-enyl diphosphate</name>
        <dbReference type="ChEBI" id="CHEBI:128753"/>
    </ligand>
</feature>
<feature type="binding site" evidence="1">
    <location>
        <position position="211"/>
    </location>
    <ligand>
        <name>dimethylallyl diphosphate</name>
        <dbReference type="ChEBI" id="CHEBI:57623"/>
    </ligand>
</feature>
<feature type="binding site" evidence="1">
    <location>
        <position position="211"/>
    </location>
    <ligand>
        <name>isopentenyl diphosphate</name>
        <dbReference type="ChEBI" id="CHEBI:128769"/>
    </ligand>
</feature>
<feature type="binding site" evidence="1">
    <location>
        <position position="251"/>
    </location>
    <ligand>
        <name>(2E)-4-hydroxy-3-methylbut-2-enyl diphosphate</name>
        <dbReference type="ChEBI" id="CHEBI:128753"/>
    </ligand>
</feature>
<feature type="binding site" evidence="1">
    <location>
        <position position="251"/>
    </location>
    <ligand>
        <name>dimethylallyl diphosphate</name>
        <dbReference type="ChEBI" id="CHEBI:57623"/>
    </ligand>
</feature>
<feature type="binding site" evidence="1">
    <location>
        <position position="251"/>
    </location>
    <ligand>
        <name>isopentenyl diphosphate</name>
        <dbReference type="ChEBI" id="CHEBI:128769"/>
    </ligand>
</feature>
<dbReference type="EC" id="1.17.7.4" evidence="1"/>
<dbReference type="EMBL" id="AE000512">
    <property type="protein sequence ID" value="AAD36513.1"/>
    <property type="molecule type" value="Genomic_DNA"/>
</dbReference>
<dbReference type="PIR" id="A72253">
    <property type="entry name" value="A72253"/>
</dbReference>
<dbReference type="RefSeq" id="NP_229243.1">
    <property type="nucleotide sequence ID" value="NC_000853.1"/>
</dbReference>
<dbReference type="RefSeq" id="WP_004081718.1">
    <property type="nucleotide sequence ID" value="NZ_CP011107.1"/>
</dbReference>
<dbReference type="SMR" id="Q9X1F7"/>
<dbReference type="FunCoup" id="Q9X1F7">
    <property type="interactions" value="257"/>
</dbReference>
<dbReference type="STRING" id="243274.TM_1444"/>
<dbReference type="PaxDb" id="243274-THEMA_07095"/>
<dbReference type="DNASU" id="898031"/>
<dbReference type="EnsemblBacteria" id="AAD36513">
    <property type="protein sequence ID" value="AAD36513"/>
    <property type="gene ID" value="TM_1444"/>
</dbReference>
<dbReference type="KEGG" id="tma:TM1444"/>
<dbReference type="KEGG" id="tmi:THEMA_07095"/>
<dbReference type="KEGG" id="tmm:Tmari_1450"/>
<dbReference type="KEGG" id="tmw:THMA_1474"/>
<dbReference type="eggNOG" id="COG0761">
    <property type="taxonomic scope" value="Bacteria"/>
</dbReference>
<dbReference type="InParanoid" id="Q9X1F7"/>
<dbReference type="OrthoDB" id="9777362at2"/>
<dbReference type="UniPathway" id="UPA00056">
    <property type="reaction ID" value="UER00097"/>
</dbReference>
<dbReference type="UniPathway" id="UPA00059">
    <property type="reaction ID" value="UER00105"/>
</dbReference>
<dbReference type="Proteomes" id="UP000008183">
    <property type="component" value="Chromosome"/>
</dbReference>
<dbReference type="GO" id="GO:0005829">
    <property type="term" value="C:cytosol"/>
    <property type="evidence" value="ECO:0000318"/>
    <property type="project" value="GO_Central"/>
</dbReference>
<dbReference type="GO" id="GO:0051539">
    <property type="term" value="F:4 iron, 4 sulfur cluster binding"/>
    <property type="evidence" value="ECO:0007669"/>
    <property type="project" value="UniProtKB-UniRule"/>
</dbReference>
<dbReference type="GO" id="GO:0051745">
    <property type="term" value="F:4-hydroxy-3-methylbut-2-enyl diphosphate reductase activity"/>
    <property type="evidence" value="ECO:0000318"/>
    <property type="project" value="GO_Central"/>
</dbReference>
<dbReference type="GO" id="GO:0046872">
    <property type="term" value="F:metal ion binding"/>
    <property type="evidence" value="ECO:0007669"/>
    <property type="project" value="UniProtKB-KW"/>
</dbReference>
<dbReference type="GO" id="GO:0050992">
    <property type="term" value="P:dimethylallyl diphosphate biosynthetic process"/>
    <property type="evidence" value="ECO:0007669"/>
    <property type="project" value="UniProtKB-UniRule"/>
</dbReference>
<dbReference type="GO" id="GO:0019288">
    <property type="term" value="P:isopentenyl diphosphate biosynthetic process, methylerythritol 4-phosphate pathway"/>
    <property type="evidence" value="ECO:0000318"/>
    <property type="project" value="GO_Central"/>
</dbReference>
<dbReference type="GO" id="GO:0016114">
    <property type="term" value="P:terpenoid biosynthetic process"/>
    <property type="evidence" value="ECO:0007669"/>
    <property type="project" value="UniProtKB-UniRule"/>
</dbReference>
<dbReference type="CDD" id="cd13944">
    <property type="entry name" value="lytB_ispH"/>
    <property type="match status" value="1"/>
</dbReference>
<dbReference type="Gene3D" id="3.40.50.11270">
    <property type="match status" value="1"/>
</dbReference>
<dbReference type="Gene3D" id="3.40.1010.20">
    <property type="entry name" value="4-hydroxy-3-methylbut-2-enyl diphosphate reductase, catalytic domain"/>
    <property type="match status" value="2"/>
</dbReference>
<dbReference type="HAMAP" id="MF_00191">
    <property type="entry name" value="IspH"/>
    <property type="match status" value="1"/>
</dbReference>
<dbReference type="InterPro" id="IPR003451">
    <property type="entry name" value="LytB/IspH"/>
</dbReference>
<dbReference type="NCBIfam" id="TIGR00216">
    <property type="entry name" value="ispH_lytB"/>
    <property type="match status" value="1"/>
</dbReference>
<dbReference type="PANTHER" id="PTHR30426">
    <property type="entry name" value="4-HYDROXY-3-METHYLBUT-2-ENYL DIPHOSPHATE REDUCTASE"/>
    <property type="match status" value="1"/>
</dbReference>
<dbReference type="PANTHER" id="PTHR30426:SF0">
    <property type="entry name" value="4-HYDROXY-3-METHYLBUT-2-ENYL DIPHOSPHATE REDUCTASE"/>
    <property type="match status" value="1"/>
</dbReference>
<dbReference type="Pfam" id="PF02401">
    <property type="entry name" value="LYTB"/>
    <property type="match status" value="1"/>
</dbReference>
<evidence type="ECO:0000255" key="1">
    <source>
        <dbReference type="HAMAP-Rule" id="MF_00191"/>
    </source>
</evidence>
<sequence length="275" mass="30921">MKIVVAKNIGFCFGVERAIRTVEELLDEGKKVVTDGEIVHNKQVMEQLTKKGLKVSSEMTDGEVFVVRAHGIPKDRLEELKKIFPEVVDLTCPIVSQLFKTAQRYAKERKVIVFGKEDHPEMVALRGYAPAIVTKVPFKLEEKKVVFLSQTTSSLEEYKEFVAAMIRMNEFEEAVFLNTICPVTVNREREVEELSKICDLSIVVGGKHSSNTGKLFRIASKHSKTIWIESPDELPADVVKYGTVCVFSGTSTPNSLIENVVRKLKEMEGKRDGTI</sequence>
<keyword id="KW-0004">4Fe-4S</keyword>
<keyword id="KW-0408">Iron</keyword>
<keyword id="KW-0411">Iron-sulfur</keyword>
<keyword id="KW-0414">Isoprene biosynthesis</keyword>
<keyword id="KW-0479">Metal-binding</keyword>
<keyword id="KW-0560">Oxidoreductase</keyword>
<keyword id="KW-1185">Reference proteome</keyword>
<organism>
    <name type="scientific">Thermotoga maritima (strain ATCC 43589 / DSM 3109 / JCM 10099 / NBRC 100826 / MSB8)</name>
    <dbReference type="NCBI Taxonomy" id="243274"/>
    <lineage>
        <taxon>Bacteria</taxon>
        <taxon>Thermotogati</taxon>
        <taxon>Thermotogota</taxon>
        <taxon>Thermotogae</taxon>
        <taxon>Thermotogales</taxon>
        <taxon>Thermotogaceae</taxon>
        <taxon>Thermotoga</taxon>
    </lineage>
</organism>
<gene>
    <name evidence="1" type="primary">ispH</name>
    <name type="synonym">lytB</name>
    <name type="ordered locus">TM_1444</name>
</gene>
<reference key="1">
    <citation type="journal article" date="1999" name="Nature">
        <title>Evidence for lateral gene transfer between Archaea and Bacteria from genome sequence of Thermotoga maritima.</title>
        <authorList>
            <person name="Nelson K.E."/>
            <person name="Clayton R.A."/>
            <person name="Gill S.R."/>
            <person name="Gwinn M.L."/>
            <person name="Dodson R.J."/>
            <person name="Haft D.H."/>
            <person name="Hickey E.K."/>
            <person name="Peterson J.D."/>
            <person name="Nelson W.C."/>
            <person name="Ketchum K.A."/>
            <person name="McDonald L.A."/>
            <person name="Utterback T.R."/>
            <person name="Malek J.A."/>
            <person name="Linher K.D."/>
            <person name="Garrett M.M."/>
            <person name="Stewart A.M."/>
            <person name="Cotton M.D."/>
            <person name="Pratt M.S."/>
            <person name="Phillips C.A."/>
            <person name="Richardson D.L."/>
            <person name="Heidelberg J.F."/>
            <person name="Sutton G.G."/>
            <person name="Fleischmann R.D."/>
            <person name="Eisen J.A."/>
            <person name="White O."/>
            <person name="Salzberg S.L."/>
            <person name="Smith H.O."/>
            <person name="Venter J.C."/>
            <person name="Fraser C.M."/>
        </authorList>
    </citation>
    <scope>NUCLEOTIDE SEQUENCE [LARGE SCALE GENOMIC DNA]</scope>
    <source>
        <strain>ATCC 43589 / DSM 3109 / JCM 10099 / NBRC 100826 / MSB8</strain>
    </source>
</reference>
<accession>Q9X1F7</accession>
<protein>
    <recommendedName>
        <fullName evidence="1">4-hydroxy-3-methylbut-2-enyl diphosphate reductase</fullName>
        <shortName evidence="1">HMBPP reductase</shortName>
        <ecNumber evidence="1">1.17.7.4</ecNumber>
    </recommendedName>
</protein>
<name>ISPH_THEMA</name>
<proteinExistence type="inferred from homology"/>